<keyword id="KW-0030">Aminoacyl-tRNA synthetase</keyword>
<keyword id="KW-0067">ATP-binding</keyword>
<keyword id="KW-0963">Cytoplasm</keyword>
<keyword id="KW-0436">Ligase</keyword>
<keyword id="KW-0547">Nucleotide-binding</keyword>
<keyword id="KW-0648">Protein biosynthesis</keyword>
<keyword id="KW-1185">Reference proteome</keyword>
<sequence length="688" mass="78244">MAQDLLLEIGVEEMPSAYMPRVLKDLKDLAQKNLAEARLSCGEVLTLGTPRRLCLWVKEISEEQEDSLLENRGPKKSIAFDANGNPSKAGLGFARSQGVDFRELQIREVSGVEYLFAIKKEKGQAAEQILPGLLLKVIHSLSFPKSMTWSYYQTRFARPIRWLLAIFGDKNVEFNIENIKSANYTYGHRFLSTGVLLVTSIDDYFRVLREHYVILDQAERKKMIWQQVQKVAGEAGGKAMENEELLEEVAFLVEFPTAFYGEFSPSYLDVPPEVLTTSMIEHQRYFPVYNNEGRLLPGFVGVRNGTDYCLDIVRAGNERVLKARLEDALFFWNEDSRKSLEEMSAKLKNVLFHERLGTLADKVLRLQKLALFIGQQTGLGQPEKLQRSALLCKADLMSNMVYEFPELQGIMGRYYASGSAEEPEVAEAIFEHYLPRFAGDKLPSSAGGIVLSLAEKMDNLMGCFSIGIKPSGSQDPYALRRQALGLVNIILDKKLSIDLKLVFEQAYLGYKDIDLEKSREDSVKELLDFIYQRMRGVLLDNGISYDVVDAALSRPSFDLFETYYRAFKLQEFKKSPVFEDFMVVYNRVHNLSRKWESEEIDLDLLVDESEKNLCQKLPGLQEDIKKSLIAQDYTRALELLAALRADIDQFFTAVMVMVDDERLKAARLGILKSIANMFNSIADFSKIV</sequence>
<organism>
    <name type="scientific">Syntrophomonas wolfei subsp. wolfei (strain DSM 2245B / Goettingen)</name>
    <dbReference type="NCBI Taxonomy" id="335541"/>
    <lineage>
        <taxon>Bacteria</taxon>
        <taxon>Bacillati</taxon>
        <taxon>Bacillota</taxon>
        <taxon>Clostridia</taxon>
        <taxon>Eubacteriales</taxon>
        <taxon>Syntrophomonadaceae</taxon>
        <taxon>Syntrophomonas</taxon>
    </lineage>
</organism>
<gene>
    <name evidence="1" type="primary">glyS</name>
    <name type="ordered locus">Swol_1515</name>
</gene>
<reference key="1">
    <citation type="journal article" date="2010" name="Environ. Microbiol.">
        <title>The genome of Syntrophomonas wolfei: new insights into syntrophic metabolism and biohydrogen production.</title>
        <authorList>
            <person name="Sieber J.R."/>
            <person name="Sims D.R."/>
            <person name="Han C."/>
            <person name="Kim E."/>
            <person name="Lykidis A."/>
            <person name="Lapidus A.L."/>
            <person name="McDonnald E."/>
            <person name="Rohlin L."/>
            <person name="Culley D.E."/>
            <person name="Gunsalus R."/>
            <person name="McInerney M.J."/>
        </authorList>
    </citation>
    <scope>NUCLEOTIDE SEQUENCE [LARGE SCALE GENOMIC DNA]</scope>
    <source>
        <strain>DSM 2245B / Goettingen</strain>
    </source>
</reference>
<dbReference type="EC" id="6.1.1.14" evidence="1"/>
<dbReference type="EMBL" id="CP000448">
    <property type="protein sequence ID" value="ABI68818.1"/>
    <property type="molecule type" value="Genomic_DNA"/>
</dbReference>
<dbReference type="RefSeq" id="WP_011640917.1">
    <property type="nucleotide sequence ID" value="NC_008346.1"/>
</dbReference>
<dbReference type="SMR" id="Q0AWT6"/>
<dbReference type="STRING" id="335541.Swol_1515"/>
<dbReference type="KEGG" id="swo:Swol_1515"/>
<dbReference type="eggNOG" id="COG0751">
    <property type="taxonomic scope" value="Bacteria"/>
</dbReference>
<dbReference type="HOGENOM" id="CLU_007220_2_2_9"/>
<dbReference type="OrthoDB" id="9775440at2"/>
<dbReference type="Proteomes" id="UP000001968">
    <property type="component" value="Chromosome"/>
</dbReference>
<dbReference type="GO" id="GO:0005829">
    <property type="term" value="C:cytosol"/>
    <property type="evidence" value="ECO:0007669"/>
    <property type="project" value="TreeGrafter"/>
</dbReference>
<dbReference type="GO" id="GO:0004814">
    <property type="term" value="F:arginine-tRNA ligase activity"/>
    <property type="evidence" value="ECO:0007669"/>
    <property type="project" value="InterPro"/>
</dbReference>
<dbReference type="GO" id="GO:0005524">
    <property type="term" value="F:ATP binding"/>
    <property type="evidence" value="ECO:0007669"/>
    <property type="project" value="UniProtKB-UniRule"/>
</dbReference>
<dbReference type="GO" id="GO:0004820">
    <property type="term" value="F:glycine-tRNA ligase activity"/>
    <property type="evidence" value="ECO:0007669"/>
    <property type="project" value="UniProtKB-UniRule"/>
</dbReference>
<dbReference type="GO" id="GO:0006420">
    <property type="term" value="P:arginyl-tRNA aminoacylation"/>
    <property type="evidence" value="ECO:0007669"/>
    <property type="project" value="InterPro"/>
</dbReference>
<dbReference type="GO" id="GO:0006426">
    <property type="term" value="P:glycyl-tRNA aminoacylation"/>
    <property type="evidence" value="ECO:0007669"/>
    <property type="project" value="UniProtKB-UniRule"/>
</dbReference>
<dbReference type="Gene3D" id="1.10.730.10">
    <property type="entry name" value="Isoleucyl-tRNA Synthetase, Domain 1"/>
    <property type="match status" value="1"/>
</dbReference>
<dbReference type="HAMAP" id="MF_00255">
    <property type="entry name" value="Gly_tRNA_synth_beta"/>
    <property type="match status" value="1"/>
</dbReference>
<dbReference type="InterPro" id="IPR008909">
    <property type="entry name" value="DALR_anticod-bd"/>
</dbReference>
<dbReference type="InterPro" id="IPR015944">
    <property type="entry name" value="Gly-tRNA-synth_bsu"/>
</dbReference>
<dbReference type="InterPro" id="IPR006194">
    <property type="entry name" value="Gly-tRNA-synth_heterodimer"/>
</dbReference>
<dbReference type="NCBIfam" id="TIGR00211">
    <property type="entry name" value="glyS"/>
    <property type="match status" value="1"/>
</dbReference>
<dbReference type="PANTHER" id="PTHR30075:SF2">
    <property type="entry name" value="GLYCINE--TRNA LIGASE, CHLOROPLASTIC_MITOCHONDRIAL 2"/>
    <property type="match status" value="1"/>
</dbReference>
<dbReference type="PANTHER" id="PTHR30075">
    <property type="entry name" value="GLYCYL-TRNA SYNTHETASE"/>
    <property type="match status" value="1"/>
</dbReference>
<dbReference type="Pfam" id="PF05746">
    <property type="entry name" value="DALR_1"/>
    <property type="match status" value="1"/>
</dbReference>
<dbReference type="Pfam" id="PF02092">
    <property type="entry name" value="tRNA_synt_2f"/>
    <property type="match status" value="1"/>
</dbReference>
<dbReference type="PRINTS" id="PR01045">
    <property type="entry name" value="TRNASYNTHGB"/>
</dbReference>
<dbReference type="SMART" id="SM00836">
    <property type="entry name" value="DALR_1"/>
    <property type="match status" value="1"/>
</dbReference>
<dbReference type="SUPFAM" id="SSF109604">
    <property type="entry name" value="HD-domain/PDEase-like"/>
    <property type="match status" value="1"/>
</dbReference>
<dbReference type="PROSITE" id="PS50861">
    <property type="entry name" value="AA_TRNA_LIGASE_II_GLYAB"/>
    <property type="match status" value="1"/>
</dbReference>
<feature type="chain" id="PRO_1000101364" description="Glycine--tRNA ligase beta subunit">
    <location>
        <begin position="1"/>
        <end position="688"/>
    </location>
</feature>
<comment type="catalytic activity">
    <reaction evidence="1">
        <text>tRNA(Gly) + glycine + ATP = glycyl-tRNA(Gly) + AMP + diphosphate</text>
        <dbReference type="Rhea" id="RHEA:16013"/>
        <dbReference type="Rhea" id="RHEA-COMP:9664"/>
        <dbReference type="Rhea" id="RHEA-COMP:9683"/>
        <dbReference type="ChEBI" id="CHEBI:30616"/>
        <dbReference type="ChEBI" id="CHEBI:33019"/>
        <dbReference type="ChEBI" id="CHEBI:57305"/>
        <dbReference type="ChEBI" id="CHEBI:78442"/>
        <dbReference type="ChEBI" id="CHEBI:78522"/>
        <dbReference type="ChEBI" id="CHEBI:456215"/>
        <dbReference type="EC" id="6.1.1.14"/>
    </reaction>
</comment>
<comment type="subunit">
    <text evidence="1">Tetramer of two alpha and two beta subunits.</text>
</comment>
<comment type="subcellular location">
    <subcellularLocation>
        <location evidence="1">Cytoplasm</location>
    </subcellularLocation>
</comment>
<comment type="similarity">
    <text evidence="1">Belongs to the class-II aminoacyl-tRNA synthetase family.</text>
</comment>
<evidence type="ECO:0000255" key="1">
    <source>
        <dbReference type="HAMAP-Rule" id="MF_00255"/>
    </source>
</evidence>
<proteinExistence type="inferred from homology"/>
<protein>
    <recommendedName>
        <fullName evidence="1">Glycine--tRNA ligase beta subunit</fullName>
        <ecNumber evidence="1">6.1.1.14</ecNumber>
    </recommendedName>
    <alternativeName>
        <fullName evidence="1">Glycyl-tRNA synthetase beta subunit</fullName>
        <shortName evidence="1">GlyRS</shortName>
    </alternativeName>
</protein>
<name>SYGB_SYNWW</name>
<accession>Q0AWT6</accession>